<proteinExistence type="evidence at transcript level"/>
<protein>
    <recommendedName>
        <fullName>Intestine-specific homeobox</fullName>
    </recommendedName>
</protein>
<comment type="function">
    <text evidence="3 4">Transcription factor that regulates gene expression in intestine. May participate in vitamin A metabolism most likely by regulating BCO1 expression in the intestine.</text>
</comment>
<comment type="subcellular location">
    <subcellularLocation>
        <location evidence="1">Nucleus</location>
    </subcellularLocation>
</comment>
<comment type="alternative products">
    <event type="alternative splicing"/>
    <isoform>
        <id>A1A546-1</id>
        <name>1</name>
        <sequence type="displayed"/>
    </isoform>
    <isoform>
        <id>A1A546-2</id>
        <name>2</name>
        <sequence type="described" ref="VSP_025717"/>
    </isoform>
</comment>
<comment type="tissue specificity">
    <text evidence="3 4">Expressed in intestinal epithelial cells from the duodenum to the proximal colon.</text>
</comment>
<comment type="developmental stage">
    <text evidence="3">Appears late in development, just before the villus transition in intestine morphogenesis. Restricted to the epithelial compartment in both adult and fetal intestine.</text>
</comment>
<comment type="disruption phenotype">
    <text evidence="3">Mice appear healthy for at least 1 year and display normal histological features in the gut. They however show defects in intestinal gene expression with a dysregulation of the scavenger receptor Scarb1.</text>
</comment>
<gene>
    <name type="primary">Isx</name>
</gene>
<dbReference type="EMBL" id="AK018615">
    <property type="protein sequence ID" value="BAB31309.1"/>
    <property type="molecule type" value="mRNA"/>
</dbReference>
<dbReference type="EMBL" id="BC128289">
    <property type="protein sequence ID" value="AAI28290.2"/>
    <property type="molecule type" value="mRNA"/>
</dbReference>
<dbReference type="EMBL" id="BC128290">
    <property type="protein sequence ID" value="AAI28291.2"/>
    <property type="molecule type" value="mRNA"/>
</dbReference>
<dbReference type="CCDS" id="CCDS40391.1">
    <molecule id="A1A546-1"/>
</dbReference>
<dbReference type="CCDS" id="CCDS80899.1">
    <molecule id="A1A546-2"/>
</dbReference>
<dbReference type="RefSeq" id="NP_001281207.1">
    <molecule id="A1A546-2"/>
    <property type="nucleotide sequence ID" value="NM_001294278.2"/>
</dbReference>
<dbReference type="RefSeq" id="NP_082113.2">
    <molecule id="A1A546-1"/>
    <property type="nucleotide sequence ID" value="NM_027837.4"/>
</dbReference>
<dbReference type="SMR" id="A1A546"/>
<dbReference type="FunCoup" id="A1A546">
    <property type="interactions" value="767"/>
</dbReference>
<dbReference type="STRING" id="10090.ENSMUSP00000134368"/>
<dbReference type="iPTMnet" id="A1A546"/>
<dbReference type="PhosphoSitePlus" id="A1A546"/>
<dbReference type="PaxDb" id="10090-ENSMUSP00000034034"/>
<dbReference type="Antibodypedia" id="25329">
    <property type="antibodies" value="66 antibodies from 15 providers"/>
</dbReference>
<dbReference type="Ensembl" id="ENSMUST00000034034.10">
    <molecule id="A1A546-1"/>
    <property type="protein sequence ID" value="ENSMUSP00000034034.3"/>
    <property type="gene ID" value="ENSMUSG00000031621.10"/>
</dbReference>
<dbReference type="Ensembl" id="ENSMUST00000174427.2">
    <molecule id="A1A546-2"/>
    <property type="protein sequence ID" value="ENSMUSP00000134368.2"/>
    <property type="gene ID" value="ENSMUSG00000031621.10"/>
</dbReference>
<dbReference type="GeneID" id="71597"/>
<dbReference type="KEGG" id="mmu:71597"/>
<dbReference type="UCSC" id="uc009mgv.1">
    <molecule id="A1A546-1"/>
    <property type="organism name" value="mouse"/>
</dbReference>
<dbReference type="UCSC" id="uc012ggb.1">
    <molecule id="A1A546-2"/>
    <property type="organism name" value="mouse"/>
</dbReference>
<dbReference type="AGR" id="MGI:1918847"/>
<dbReference type="CTD" id="91464"/>
<dbReference type="MGI" id="MGI:1918847">
    <property type="gene designation" value="Isx"/>
</dbReference>
<dbReference type="VEuPathDB" id="HostDB:ENSMUSG00000031621"/>
<dbReference type="eggNOG" id="KOG0490">
    <property type="taxonomic scope" value="Eukaryota"/>
</dbReference>
<dbReference type="GeneTree" id="ENSGT00940000161702"/>
<dbReference type="HOGENOM" id="CLU_079373_0_0_1"/>
<dbReference type="InParanoid" id="A1A546"/>
<dbReference type="OMA" id="CHPWETQ"/>
<dbReference type="OrthoDB" id="83588at9989"/>
<dbReference type="PhylomeDB" id="A1A546"/>
<dbReference type="TreeFam" id="TF315976"/>
<dbReference type="BioGRID-ORCS" id="71597">
    <property type="hits" value="3 hits in 79 CRISPR screens"/>
</dbReference>
<dbReference type="PRO" id="PR:A1A546"/>
<dbReference type="Proteomes" id="UP000000589">
    <property type="component" value="Chromosome 8"/>
</dbReference>
<dbReference type="RNAct" id="A1A546">
    <property type="molecule type" value="protein"/>
</dbReference>
<dbReference type="Bgee" id="ENSMUSG00000031621">
    <property type="expression patterns" value="Expressed in small intestine Peyer's patch and 26 other cell types or tissues"/>
</dbReference>
<dbReference type="ExpressionAtlas" id="A1A546">
    <property type="expression patterns" value="baseline and differential"/>
</dbReference>
<dbReference type="GO" id="GO:0005634">
    <property type="term" value="C:nucleus"/>
    <property type="evidence" value="ECO:0000305"/>
    <property type="project" value="MGI"/>
</dbReference>
<dbReference type="GO" id="GO:0001227">
    <property type="term" value="F:DNA-binding transcription repressor activity, RNA polymerase II-specific"/>
    <property type="evidence" value="ECO:0000315"/>
    <property type="project" value="MGI"/>
</dbReference>
<dbReference type="GO" id="GO:0043565">
    <property type="term" value="F:sequence-specific DNA binding"/>
    <property type="evidence" value="ECO:0000314"/>
    <property type="project" value="MGI"/>
</dbReference>
<dbReference type="GO" id="GO:1904479">
    <property type="term" value="P:negative regulation of intestinal absorption"/>
    <property type="evidence" value="ECO:0000315"/>
    <property type="project" value="MGI"/>
</dbReference>
<dbReference type="GO" id="GO:0006357">
    <property type="term" value="P:regulation of transcription by RNA polymerase II"/>
    <property type="evidence" value="ECO:0000315"/>
    <property type="project" value="MGI"/>
</dbReference>
<dbReference type="GO" id="GO:1901738">
    <property type="term" value="P:regulation of vitamin A metabolic process"/>
    <property type="evidence" value="ECO:0000315"/>
    <property type="project" value="MGI"/>
</dbReference>
<dbReference type="CDD" id="cd00086">
    <property type="entry name" value="homeodomain"/>
    <property type="match status" value="1"/>
</dbReference>
<dbReference type="FunFam" id="1.10.10.60:FF:000369">
    <property type="entry name" value="Intestine specific homeobox"/>
    <property type="match status" value="1"/>
</dbReference>
<dbReference type="Gene3D" id="1.10.10.60">
    <property type="entry name" value="Homeodomain-like"/>
    <property type="match status" value="1"/>
</dbReference>
<dbReference type="InterPro" id="IPR001356">
    <property type="entry name" value="HD"/>
</dbReference>
<dbReference type="InterPro" id="IPR017970">
    <property type="entry name" value="Homeobox_CS"/>
</dbReference>
<dbReference type="InterPro" id="IPR009057">
    <property type="entry name" value="Homeodomain-like_sf"/>
</dbReference>
<dbReference type="InterPro" id="IPR050649">
    <property type="entry name" value="Paired_Homeobox_TFs"/>
</dbReference>
<dbReference type="PANTHER" id="PTHR24329">
    <property type="entry name" value="HOMEOBOX PROTEIN ARISTALESS"/>
    <property type="match status" value="1"/>
</dbReference>
<dbReference type="PANTHER" id="PTHR24329:SF362">
    <property type="entry name" value="INTESTINE-SPECIFIC HOMEOBOX"/>
    <property type="match status" value="1"/>
</dbReference>
<dbReference type="Pfam" id="PF00046">
    <property type="entry name" value="Homeodomain"/>
    <property type="match status" value="1"/>
</dbReference>
<dbReference type="SMART" id="SM00389">
    <property type="entry name" value="HOX"/>
    <property type="match status" value="1"/>
</dbReference>
<dbReference type="SUPFAM" id="SSF46689">
    <property type="entry name" value="Homeodomain-like"/>
    <property type="match status" value="1"/>
</dbReference>
<dbReference type="PROSITE" id="PS00027">
    <property type="entry name" value="HOMEOBOX_1"/>
    <property type="match status" value="1"/>
</dbReference>
<dbReference type="PROSITE" id="PS50071">
    <property type="entry name" value="HOMEOBOX_2"/>
    <property type="match status" value="1"/>
</dbReference>
<sequence>MAGPTIHRDMEKSSGYCEAPENLGLSFSIEAILKKPTERRSLPRPQSICKEDSRQTTIPGSKLERPPQDQPQEEKKNKRRVRTTFTTEQLQELEKLFHFTHYPDIHVRSQLASRINLPEARVQIWFQNQRAKWRKQEKSGNLSAPQQPGEAGLALPSNMDVSGPVLTPTAMTTLVPPTECCLLSQTQLPSSWFPTQIPLVPWHPWDLQPLPGPLTQHPCVPTFMFPPLHPKWGSICATST</sequence>
<name>ISX_MOUSE</name>
<organism>
    <name type="scientific">Mus musculus</name>
    <name type="common">Mouse</name>
    <dbReference type="NCBI Taxonomy" id="10090"/>
    <lineage>
        <taxon>Eukaryota</taxon>
        <taxon>Metazoa</taxon>
        <taxon>Chordata</taxon>
        <taxon>Craniata</taxon>
        <taxon>Vertebrata</taxon>
        <taxon>Euteleostomi</taxon>
        <taxon>Mammalia</taxon>
        <taxon>Eutheria</taxon>
        <taxon>Euarchontoglires</taxon>
        <taxon>Glires</taxon>
        <taxon>Rodentia</taxon>
        <taxon>Myomorpha</taxon>
        <taxon>Muroidea</taxon>
        <taxon>Muridae</taxon>
        <taxon>Murinae</taxon>
        <taxon>Mus</taxon>
        <taxon>Mus</taxon>
    </lineage>
</organism>
<keyword id="KW-0010">Activator</keyword>
<keyword id="KW-0025">Alternative splicing</keyword>
<keyword id="KW-0238">DNA-binding</keyword>
<keyword id="KW-0371">Homeobox</keyword>
<keyword id="KW-0539">Nucleus</keyword>
<keyword id="KW-1185">Reference proteome</keyword>
<keyword id="KW-0804">Transcription</keyword>
<keyword id="KW-0805">Transcription regulation</keyword>
<accession>A1A546</accession>
<accession>A1A545</accession>
<accession>Q9D2Z0</accession>
<reference key="1">
    <citation type="journal article" date="2005" name="Science">
        <title>The transcriptional landscape of the mammalian genome.</title>
        <authorList>
            <person name="Carninci P."/>
            <person name="Kasukawa T."/>
            <person name="Katayama S."/>
            <person name="Gough J."/>
            <person name="Frith M.C."/>
            <person name="Maeda N."/>
            <person name="Oyama R."/>
            <person name="Ravasi T."/>
            <person name="Lenhard B."/>
            <person name="Wells C."/>
            <person name="Kodzius R."/>
            <person name="Shimokawa K."/>
            <person name="Bajic V.B."/>
            <person name="Brenner S.E."/>
            <person name="Batalov S."/>
            <person name="Forrest A.R."/>
            <person name="Zavolan M."/>
            <person name="Davis M.J."/>
            <person name="Wilming L.G."/>
            <person name="Aidinis V."/>
            <person name="Allen J.E."/>
            <person name="Ambesi-Impiombato A."/>
            <person name="Apweiler R."/>
            <person name="Aturaliya R.N."/>
            <person name="Bailey T.L."/>
            <person name="Bansal M."/>
            <person name="Baxter L."/>
            <person name="Beisel K.W."/>
            <person name="Bersano T."/>
            <person name="Bono H."/>
            <person name="Chalk A.M."/>
            <person name="Chiu K.P."/>
            <person name="Choudhary V."/>
            <person name="Christoffels A."/>
            <person name="Clutterbuck D.R."/>
            <person name="Crowe M.L."/>
            <person name="Dalla E."/>
            <person name="Dalrymple B.P."/>
            <person name="de Bono B."/>
            <person name="Della Gatta G."/>
            <person name="di Bernardo D."/>
            <person name="Down T."/>
            <person name="Engstrom P."/>
            <person name="Fagiolini M."/>
            <person name="Faulkner G."/>
            <person name="Fletcher C.F."/>
            <person name="Fukushima T."/>
            <person name="Furuno M."/>
            <person name="Futaki S."/>
            <person name="Gariboldi M."/>
            <person name="Georgii-Hemming P."/>
            <person name="Gingeras T.R."/>
            <person name="Gojobori T."/>
            <person name="Green R.E."/>
            <person name="Gustincich S."/>
            <person name="Harbers M."/>
            <person name="Hayashi Y."/>
            <person name="Hensch T.K."/>
            <person name="Hirokawa N."/>
            <person name="Hill D."/>
            <person name="Huminiecki L."/>
            <person name="Iacono M."/>
            <person name="Ikeo K."/>
            <person name="Iwama A."/>
            <person name="Ishikawa T."/>
            <person name="Jakt M."/>
            <person name="Kanapin A."/>
            <person name="Katoh M."/>
            <person name="Kawasawa Y."/>
            <person name="Kelso J."/>
            <person name="Kitamura H."/>
            <person name="Kitano H."/>
            <person name="Kollias G."/>
            <person name="Krishnan S.P."/>
            <person name="Kruger A."/>
            <person name="Kummerfeld S.K."/>
            <person name="Kurochkin I.V."/>
            <person name="Lareau L.F."/>
            <person name="Lazarevic D."/>
            <person name="Lipovich L."/>
            <person name="Liu J."/>
            <person name="Liuni S."/>
            <person name="McWilliam S."/>
            <person name="Madan Babu M."/>
            <person name="Madera M."/>
            <person name="Marchionni L."/>
            <person name="Matsuda H."/>
            <person name="Matsuzawa S."/>
            <person name="Miki H."/>
            <person name="Mignone F."/>
            <person name="Miyake S."/>
            <person name="Morris K."/>
            <person name="Mottagui-Tabar S."/>
            <person name="Mulder N."/>
            <person name="Nakano N."/>
            <person name="Nakauchi H."/>
            <person name="Ng P."/>
            <person name="Nilsson R."/>
            <person name="Nishiguchi S."/>
            <person name="Nishikawa S."/>
            <person name="Nori F."/>
            <person name="Ohara O."/>
            <person name="Okazaki Y."/>
            <person name="Orlando V."/>
            <person name="Pang K.C."/>
            <person name="Pavan W.J."/>
            <person name="Pavesi G."/>
            <person name="Pesole G."/>
            <person name="Petrovsky N."/>
            <person name="Piazza S."/>
            <person name="Reed J."/>
            <person name="Reid J.F."/>
            <person name="Ring B.Z."/>
            <person name="Ringwald M."/>
            <person name="Rost B."/>
            <person name="Ruan Y."/>
            <person name="Salzberg S.L."/>
            <person name="Sandelin A."/>
            <person name="Schneider C."/>
            <person name="Schoenbach C."/>
            <person name="Sekiguchi K."/>
            <person name="Semple C.A."/>
            <person name="Seno S."/>
            <person name="Sessa L."/>
            <person name="Sheng Y."/>
            <person name="Shibata Y."/>
            <person name="Shimada H."/>
            <person name="Shimada K."/>
            <person name="Silva D."/>
            <person name="Sinclair B."/>
            <person name="Sperling S."/>
            <person name="Stupka E."/>
            <person name="Sugiura K."/>
            <person name="Sultana R."/>
            <person name="Takenaka Y."/>
            <person name="Taki K."/>
            <person name="Tammoja K."/>
            <person name="Tan S.L."/>
            <person name="Tang S."/>
            <person name="Taylor M.S."/>
            <person name="Tegner J."/>
            <person name="Teichmann S.A."/>
            <person name="Ueda H.R."/>
            <person name="van Nimwegen E."/>
            <person name="Verardo R."/>
            <person name="Wei C.L."/>
            <person name="Yagi K."/>
            <person name="Yamanishi H."/>
            <person name="Zabarovsky E."/>
            <person name="Zhu S."/>
            <person name="Zimmer A."/>
            <person name="Hide W."/>
            <person name="Bult C."/>
            <person name="Grimmond S.M."/>
            <person name="Teasdale R.D."/>
            <person name="Liu E.T."/>
            <person name="Brusic V."/>
            <person name="Quackenbush J."/>
            <person name="Wahlestedt C."/>
            <person name="Mattick J.S."/>
            <person name="Hume D.A."/>
            <person name="Kai C."/>
            <person name="Sasaki D."/>
            <person name="Tomaru Y."/>
            <person name="Fukuda S."/>
            <person name="Kanamori-Katayama M."/>
            <person name="Suzuki M."/>
            <person name="Aoki J."/>
            <person name="Arakawa T."/>
            <person name="Iida J."/>
            <person name="Imamura K."/>
            <person name="Itoh M."/>
            <person name="Kato T."/>
            <person name="Kawaji H."/>
            <person name="Kawagashira N."/>
            <person name="Kawashima T."/>
            <person name="Kojima M."/>
            <person name="Kondo S."/>
            <person name="Konno H."/>
            <person name="Nakano K."/>
            <person name="Ninomiya N."/>
            <person name="Nishio T."/>
            <person name="Okada M."/>
            <person name="Plessy C."/>
            <person name="Shibata K."/>
            <person name="Shiraki T."/>
            <person name="Suzuki S."/>
            <person name="Tagami M."/>
            <person name="Waki K."/>
            <person name="Watahiki A."/>
            <person name="Okamura-Oho Y."/>
            <person name="Suzuki H."/>
            <person name="Kawai J."/>
            <person name="Hayashizaki Y."/>
        </authorList>
    </citation>
    <scope>NUCLEOTIDE SEQUENCE [LARGE SCALE MRNA] (ISOFORM 1)</scope>
    <source>
        <strain>C57BL/6J</strain>
        <tissue>Cecum</tissue>
    </source>
</reference>
<reference key="2">
    <citation type="journal article" date="2004" name="Genome Res.">
        <title>The status, quality, and expansion of the NIH full-length cDNA project: the Mammalian Gene Collection (MGC).</title>
        <authorList>
            <consortium name="The MGC Project Team"/>
        </authorList>
    </citation>
    <scope>NUCLEOTIDE SEQUENCE [LARGE SCALE MRNA] (ISOFORMS 1 AND 2)</scope>
</reference>
<reference key="3">
    <citation type="journal article" date="2006" name="Development">
        <title>A dynamic expression survey identifies transcription factors relevant in mouse digestive tract development.</title>
        <authorList>
            <person name="Choi M.Y."/>
            <person name="Romer A.I."/>
            <person name="Hu M."/>
            <person name="Lepourcelet M."/>
            <person name="Mechoor A."/>
            <person name="Yesilaltay A."/>
            <person name="Krieger M."/>
            <person name="Gray P.A."/>
            <person name="Shivdasani R.A."/>
        </authorList>
    </citation>
    <scope>FUNCTION</scope>
    <scope>TISSUE SPECIFICITY</scope>
    <scope>DEVELOPMENTAL STAGE</scope>
    <scope>DISRUPTION PHENOTYPE</scope>
</reference>
<reference key="4">
    <citation type="journal article" date="2008" name="J. Biol. Chem.">
        <title>Isx participates in the maintenance of vitamin A metabolism by regulation of beta-carotene 15,15'-monooxygenase (Bcmo1) expression.</title>
        <authorList>
            <person name="Seino Y."/>
            <person name="Miki T."/>
            <person name="Kiyonari H."/>
            <person name="Abe T."/>
            <person name="Fujimoto W."/>
            <person name="Kimura K."/>
            <person name="Takeuchi A."/>
            <person name="Takahashi Y."/>
            <person name="Oiso Y."/>
            <person name="Iwanaga T."/>
            <person name="Seino S."/>
        </authorList>
    </citation>
    <scope>FUNCTION</scope>
    <scope>TISSUE SPECIFICITY</scope>
</reference>
<evidence type="ECO:0000255" key="1">
    <source>
        <dbReference type="PROSITE-ProRule" id="PRU00108"/>
    </source>
</evidence>
<evidence type="ECO:0000256" key="2">
    <source>
        <dbReference type="SAM" id="MobiDB-lite"/>
    </source>
</evidence>
<evidence type="ECO:0000269" key="3">
    <source>
    </source>
</evidence>
<evidence type="ECO:0000269" key="4">
    <source>
    </source>
</evidence>
<evidence type="ECO:0000303" key="5">
    <source>
    </source>
</evidence>
<evidence type="ECO:0000305" key="6"/>
<feature type="chain" id="PRO_0000288603" description="Intestine-specific homeobox">
    <location>
        <begin position="1"/>
        <end position="240"/>
    </location>
</feature>
<feature type="DNA-binding region" description="Homeobox" evidence="1">
    <location>
        <begin position="78"/>
        <end position="137"/>
    </location>
</feature>
<feature type="region of interest" description="Disordered" evidence="2">
    <location>
        <begin position="36"/>
        <end position="82"/>
    </location>
</feature>
<feature type="compositionally biased region" description="Basic and acidic residues" evidence="2">
    <location>
        <begin position="62"/>
        <end position="76"/>
    </location>
</feature>
<feature type="splice variant" id="VSP_025717" description="In isoform 2." evidence="5">
    <original>EAGLALPSNMDVSGPVLTPTAMTTLVPPTECCLLSQTQLPSSWFPTQIPLVPWHPWDLQPLPGPLTQHPCVPTFMFPPLHPKWGSICATST</original>
    <variation>SCADTHCYDYIGTSHRMLPTLSDSAPFKLVPYTDSPCPMAPMGPTAPAWPSHPASLCPYLHVPTPTPQVGQHLCNFNIGTDFSLSKQATLLSQ</variation>
    <location>
        <begin position="150"/>
        <end position="240"/>
    </location>
</feature>
<feature type="sequence conflict" description="In Ref. 1; BAB31309." evidence="6" ref="1">
    <original>P</original>
    <variation>L</variation>
    <location>
        <position position="176"/>
    </location>
</feature>